<name>CASPD_BOVIN</name>
<evidence type="ECO:0000250" key="1"/>
<evidence type="ECO:0000255" key="2"/>
<evidence type="ECO:0000255" key="3">
    <source>
        <dbReference type="PROSITE-ProRule" id="PRU00046"/>
    </source>
</evidence>
<evidence type="ECO:0000269" key="4">
    <source>
    </source>
</evidence>
<evidence type="ECO:0000303" key="5">
    <source>
    </source>
</evidence>
<evidence type="ECO:0000305" key="6"/>
<evidence type="ECO:0000305" key="7">
    <source>
    </source>
</evidence>
<sequence>MAEDKHNKNPLKMLESLGKELISGLLDDFVEKNVLKLEEEEKKKIYDAKLQDKARVLVDSIRQKNQEAGQVFVQTFLNIDKNSTSIKAPEETVAGPDESVGSAATLKLCPHEEFLKLCKERAGEIYPIKERKDRTRLALIICNTEFDHMPPRNGAALDILGMKQLLEGLGYTVEVEEKLTARDMESVLWKFAAREEHKSSDSTFLVFMSHGILDGICGTMHSEEEPDVLPYDTIFRTFNNRNCLSLKDKPKVIIVQACRGANRGELWVSDSPPALADSFSQSSENLEEDAVYKTHVEKDFIAFCSSTPHNVSWRDIKKGSLFITRLITCFQKYAWCCHLEEVFRKVQQSFEKPNVKAQMPTVERLSMTRYFYLFPGN</sequence>
<feature type="propeptide" id="PRO_0000004649" evidence="2">
    <location>
        <begin position="1"/>
        <end status="unknown"/>
    </location>
</feature>
<feature type="chain" id="PRO_0000004650" description="Caspase-13 subunit 1">
    <location>
        <begin status="unknown"/>
        <end position="289"/>
    </location>
</feature>
<feature type="chain" id="PRO_0000004651" description="Caspase-13 subunit 2">
    <location>
        <begin position="290"/>
        <end position="377"/>
    </location>
</feature>
<feature type="domain" description="CARD" evidence="3">
    <location>
        <begin position="1"/>
        <end position="86"/>
    </location>
</feature>
<feature type="active site" evidence="1">
    <location>
        <position position="210"/>
    </location>
</feature>
<feature type="active site" evidence="1">
    <location>
        <position position="258"/>
    </location>
</feature>
<feature type="splice variant" id="VSP_000823" description="In isoform B." evidence="5">
    <location>
        <begin position="68"/>
        <end position="124"/>
    </location>
</feature>
<feature type="mutagenesis site" description="Inactivation." evidence="4">
    <original>C</original>
    <variation>S</variation>
    <location>
        <position position="258"/>
    </location>
</feature>
<accession>O75601</accession>
<protein>
    <recommendedName>
        <fullName>Caspase-13</fullName>
        <shortName>CASP-13</shortName>
        <ecNumber>3.4.22.-</ecNumber>
    </recommendedName>
    <alternativeName>
        <fullName>Evolutionary related interleukin-1-beta-converting enzyme</fullName>
        <shortName>ERICE</shortName>
    </alternativeName>
    <component>
        <recommendedName>
            <fullName>Caspase-13 subunit 1</fullName>
        </recommendedName>
    </component>
    <component>
        <recommendedName>
            <fullName>Caspase-13 subunit 2</fullName>
        </recommendedName>
    </component>
</protein>
<comment type="function">
    <text>Involved in the activation cascade of caspases responsible for apoptosis execution. Might function by either activating some proteins required for cell death or inactivating proteins necessary for cell survival.</text>
</comment>
<comment type="subunit">
    <text evidence="1">Heterotetramer that consists of two anti-parallel arranged heterodimers, each one formed by a small and a large subunit.</text>
</comment>
<comment type="alternative products">
    <event type="alternative splicing"/>
    <isoform>
        <id>O75601-1</id>
        <name>A</name>
        <sequence type="displayed"/>
    </isoform>
    <isoform>
        <id>O75601-2</id>
        <name>B</name>
        <sequence type="described" ref="VSP_000823"/>
    </isoform>
</comment>
<comment type="tissue specificity">
    <text>Mainly expressed in peripheral blood lymphocytes, spleen and placenta.</text>
</comment>
<comment type="PTM">
    <text>The two subunits are derived from the precursor sequence by an autocatalytic mechanism or by cleavage by Caspase-8.</text>
</comment>
<comment type="similarity">
    <text evidence="6">Belongs to the peptidase C14A family.</text>
</comment>
<comment type="caution">
    <text evidence="7">Was originally thought to originate from human.</text>
</comment>
<dbReference type="EC" id="3.4.22.-"/>
<dbReference type="EMBL" id="AF078533">
    <property type="protein sequence ID" value="AAC28380.1"/>
    <property type="molecule type" value="mRNA"/>
</dbReference>
<dbReference type="EMBL" id="AF383946">
    <property type="protein sequence ID" value="AAK77964.1"/>
    <property type="molecule type" value="mRNA"/>
</dbReference>
<dbReference type="EMBL" id="AF383947">
    <property type="protein sequence ID" value="AAK77965.1"/>
    <property type="molecule type" value="mRNA"/>
</dbReference>
<dbReference type="RefSeq" id="NP_788811.1">
    <molecule id="O75601-1"/>
    <property type="nucleotide sequence ID" value="NM_176638.5"/>
</dbReference>
<dbReference type="SMR" id="O75601"/>
<dbReference type="FunCoup" id="O75601">
    <property type="interactions" value="653"/>
</dbReference>
<dbReference type="MEROPS" id="C14.017"/>
<dbReference type="PeptideAtlas" id="O75601"/>
<dbReference type="GeneID" id="338039"/>
<dbReference type="KEGG" id="bta:338039"/>
<dbReference type="CTD" id="837"/>
<dbReference type="VEuPathDB" id="HostDB:ENSBTAG00000020884"/>
<dbReference type="InParanoid" id="O75601"/>
<dbReference type="OMA" id="ACRGANH"/>
<dbReference type="OrthoDB" id="6097640at2759"/>
<dbReference type="TreeFam" id="TF102023"/>
<dbReference type="Reactome" id="R-BTA-5620971">
    <property type="pathway name" value="Pyroptosis"/>
</dbReference>
<dbReference type="Proteomes" id="UP000009136">
    <property type="component" value="Chromosome 15"/>
</dbReference>
<dbReference type="Bgee" id="ENSBTAG00000020884">
    <property type="expression patterns" value="Expressed in neutrophil and 103 other cell types or tissues"/>
</dbReference>
<dbReference type="GO" id="GO:0005737">
    <property type="term" value="C:cytoplasm"/>
    <property type="evidence" value="ECO:0000318"/>
    <property type="project" value="GO_Central"/>
</dbReference>
<dbReference type="GO" id="GO:0005829">
    <property type="term" value="C:cytosol"/>
    <property type="evidence" value="ECO:0000318"/>
    <property type="project" value="GO_Central"/>
</dbReference>
<dbReference type="GO" id="GO:0072558">
    <property type="term" value="C:NLRP1 inflammasome complex"/>
    <property type="evidence" value="ECO:0000318"/>
    <property type="project" value="GO_Central"/>
</dbReference>
<dbReference type="GO" id="GO:0004197">
    <property type="term" value="F:cysteine-type endopeptidase activity"/>
    <property type="evidence" value="ECO:0000304"/>
    <property type="project" value="ProtInc"/>
</dbReference>
<dbReference type="GO" id="GO:0006915">
    <property type="term" value="P:apoptotic process"/>
    <property type="evidence" value="ECO:0000304"/>
    <property type="project" value="ProtInc"/>
</dbReference>
<dbReference type="GO" id="GO:0050729">
    <property type="term" value="P:positive regulation of inflammatory response"/>
    <property type="evidence" value="ECO:0000318"/>
    <property type="project" value="GO_Central"/>
</dbReference>
<dbReference type="GO" id="GO:0043525">
    <property type="term" value="P:positive regulation of neuron apoptotic process"/>
    <property type="evidence" value="ECO:0000318"/>
    <property type="project" value="GO_Central"/>
</dbReference>
<dbReference type="GO" id="GO:0006508">
    <property type="term" value="P:proteolysis"/>
    <property type="evidence" value="ECO:0007669"/>
    <property type="project" value="UniProtKB-KW"/>
</dbReference>
<dbReference type="CDD" id="cd08325">
    <property type="entry name" value="CARD_CASP1-like"/>
    <property type="match status" value="1"/>
</dbReference>
<dbReference type="CDD" id="cd00032">
    <property type="entry name" value="CASc"/>
    <property type="match status" value="1"/>
</dbReference>
<dbReference type="FunFam" id="3.40.50.1460:FF:000007">
    <property type="entry name" value="Caspase-1"/>
    <property type="match status" value="1"/>
</dbReference>
<dbReference type="FunFam" id="1.10.533.10:FF:000073">
    <property type="entry name" value="Inactive caspase-12"/>
    <property type="match status" value="1"/>
</dbReference>
<dbReference type="Gene3D" id="3.40.50.1460">
    <property type="match status" value="1"/>
</dbReference>
<dbReference type="Gene3D" id="1.10.533.10">
    <property type="entry name" value="Death Domain, Fas"/>
    <property type="match status" value="1"/>
</dbReference>
<dbReference type="InterPro" id="IPR001315">
    <property type="entry name" value="CARD"/>
</dbReference>
<dbReference type="InterPro" id="IPR029030">
    <property type="entry name" value="Caspase-like_dom_sf"/>
</dbReference>
<dbReference type="InterPro" id="IPR033139">
    <property type="entry name" value="Caspase_cys_AS"/>
</dbReference>
<dbReference type="InterPro" id="IPR016129">
    <property type="entry name" value="Caspase_his_AS"/>
</dbReference>
<dbReference type="InterPro" id="IPR011029">
    <property type="entry name" value="DEATH-like_dom_sf"/>
</dbReference>
<dbReference type="InterPro" id="IPR002398">
    <property type="entry name" value="Pept_C14"/>
</dbReference>
<dbReference type="InterPro" id="IPR011600">
    <property type="entry name" value="Pept_C14_caspase"/>
</dbReference>
<dbReference type="InterPro" id="IPR002138">
    <property type="entry name" value="Pept_C14_p10"/>
</dbReference>
<dbReference type="InterPro" id="IPR001309">
    <property type="entry name" value="Pept_C14_p20"/>
</dbReference>
<dbReference type="InterPro" id="IPR015917">
    <property type="entry name" value="Pept_C14A"/>
</dbReference>
<dbReference type="PANTHER" id="PTHR47901">
    <property type="entry name" value="CASPASE RECRUITMENT DOMAIN-CONTAINING PROTEIN 18"/>
    <property type="match status" value="1"/>
</dbReference>
<dbReference type="PANTHER" id="PTHR47901:SF3">
    <property type="entry name" value="CASPASE-1"/>
    <property type="match status" value="1"/>
</dbReference>
<dbReference type="Pfam" id="PF00619">
    <property type="entry name" value="CARD"/>
    <property type="match status" value="1"/>
</dbReference>
<dbReference type="Pfam" id="PF00656">
    <property type="entry name" value="Peptidase_C14"/>
    <property type="match status" value="1"/>
</dbReference>
<dbReference type="PIRSF" id="PIRSF038001">
    <property type="entry name" value="Caspase_ICE"/>
    <property type="match status" value="1"/>
</dbReference>
<dbReference type="PRINTS" id="PR00376">
    <property type="entry name" value="IL1BCENZYME"/>
</dbReference>
<dbReference type="SMART" id="SM00114">
    <property type="entry name" value="CARD"/>
    <property type="match status" value="1"/>
</dbReference>
<dbReference type="SMART" id="SM00115">
    <property type="entry name" value="CASc"/>
    <property type="match status" value="1"/>
</dbReference>
<dbReference type="SUPFAM" id="SSF52129">
    <property type="entry name" value="Caspase-like"/>
    <property type="match status" value="1"/>
</dbReference>
<dbReference type="SUPFAM" id="SSF47986">
    <property type="entry name" value="DEATH domain"/>
    <property type="match status" value="1"/>
</dbReference>
<dbReference type="PROSITE" id="PS50209">
    <property type="entry name" value="CARD"/>
    <property type="match status" value="1"/>
</dbReference>
<dbReference type="PROSITE" id="PS01122">
    <property type="entry name" value="CASPASE_CYS"/>
    <property type="match status" value="1"/>
</dbReference>
<dbReference type="PROSITE" id="PS01121">
    <property type="entry name" value="CASPASE_HIS"/>
    <property type="match status" value="1"/>
</dbReference>
<dbReference type="PROSITE" id="PS50207">
    <property type="entry name" value="CASPASE_P10"/>
    <property type="match status" value="1"/>
</dbReference>
<dbReference type="PROSITE" id="PS50208">
    <property type="entry name" value="CASPASE_P20"/>
    <property type="match status" value="1"/>
</dbReference>
<gene>
    <name type="primary">CASP13</name>
</gene>
<keyword id="KW-0025">Alternative splicing</keyword>
<keyword id="KW-0053">Apoptosis</keyword>
<keyword id="KW-0378">Hydrolase</keyword>
<keyword id="KW-0645">Protease</keyword>
<keyword id="KW-1185">Reference proteome</keyword>
<keyword id="KW-0788">Thiol protease</keyword>
<keyword id="KW-0865">Zymogen</keyword>
<reference key="1">
    <citation type="journal article" date="1998" name="J. Biol. Chem.">
        <title>ERICE, a novel FLICE-activatable caspase.</title>
        <authorList>
            <person name="Humke E.W."/>
            <person name="Ni J."/>
            <person name="Dixit V.M."/>
        </authorList>
    </citation>
    <scope>NUCLEOTIDE SEQUENCE [MRNA] (ISOFORM A)</scope>
    <scope>MUTAGENESIS OF CYS-258</scope>
    <source>
        <tissue>Fibroblast</tissue>
    </source>
</reference>
<reference key="2">
    <citation type="journal article" date="2001" name="Biochem. Biophys. Res. Commun.">
        <title>Evidence that caspase-13 is not a human but a bovine gene.</title>
        <authorList>
            <person name="Koenig U."/>
            <person name="Eckhart L."/>
            <person name="Tschachler E."/>
        </authorList>
    </citation>
    <scope>NUCLEOTIDE SEQUENCE [MRNA] (ISOFORMS A AND B)</scope>
</reference>
<proteinExistence type="evidence at protein level"/>
<organism>
    <name type="scientific">Bos taurus</name>
    <name type="common">Bovine</name>
    <dbReference type="NCBI Taxonomy" id="9913"/>
    <lineage>
        <taxon>Eukaryota</taxon>
        <taxon>Metazoa</taxon>
        <taxon>Chordata</taxon>
        <taxon>Craniata</taxon>
        <taxon>Vertebrata</taxon>
        <taxon>Euteleostomi</taxon>
        <taxon>Mammalia</taxon>
        <taxon>Eutheria</taxon>
        <taxon>Laurasiatheria</taxon>
        <taxon>Artiodactyla</taxon>
        <taxon>Ruminantia</taxon>
        <taxon>Pecora</taxon>
        <taxon>Bovidae</taxon>
        <taxon>Bovinae</taxon>
        <taxon>Bos</taxon>
    </lineage>
</organism>